<organism>
    <name type="scientific">Escherichia coli (strain K12)</name>
    <dbReference type="NCBI Taxonomy" id="83333"/>
    <lineage>
        <taxon>Bacteria</taxon>
        <taxon>Pseudomonadati</taxon>
        <taxon>Pseudomonadota</taxon>
        <taxon>Gammaproteobacteria</taxon>
        <taxon>Enterobacterales</taxon>
        <taxon>Enterobacteriaceae</taxon>
        <taxon>Escherichia</taxon>
    </lineage>
</organism>
<accession>P0A9N0</accession>
<accession>P33996</accession>
<accession>Q2M906</accession>
<protein>
    <recommendedName>
        <fullName>Phosphocarrier protein NPr</fullName>
    </recommendedName>
    <alternativeName>
        <fullName>Nitrogen-related HPr</fullName>
    </alternativeName>
</protein>
<evidence type="ECO:0000255" key="1">
    <source>
        <dbReference type="PROSITE-ProRule" id="PRU00681"/>
    </source>
</evidence>
<evidence type="ECO:0000305" key="2"/>
<evidence type="ECO:0007829" key="3">
    <source>
        <dbReference type="PDB" id="5T17"/>
    </source>
</evidence>
<evidence type="ECO:0007829" key="4">
    <source>
        <dbReference type="PDB" id="5T1N"/>
    </source>
</evidence>
<proteinExistence type="evidence at protein level"/>
<name>PTSO_ECOLI</name>
<feature type="chain" id="PRO_0000107890" description="Phosphocarrier protein NPr">
    <location>
        <begin position="1"/>
        <end position="90"/>
    </location>
</feature>
<feature type="domain" description="HPr" evidence="1">
    <location>
        <begin position="2"/>
        <end position="90"/>
    </location>
</feature>
<feature type="active site" description="Pros-phosphohistidine intermediate" evidence="1">
    <location>
        <position position="16"/>
    </location>
</feature>
<feature type="strand" evidence="3">
    <location>
        <begin position="3"/>
        <end position="8"/>
    </location>
</feature>
<feature type="strand" evidence="4">
    <location>
        <begin position="13"/>
        <end position="15"/>
    </location>
</feature>
<feature type="helix" evidence="3">
    <location>
        <begin position="18"/>
        <end position="27"/>
    </location>
</feature>
<feature type="strand" evidence="3">
    <location>
        <begin position="35"/>
        <end position="38"/>
    </location>
</feature>
<feature type="turn" evidence="3">
    <location>
        <begin position="39"/>
        <end position="41"/>
    </location>
</feature>
<feature type="strand" evidence="3">
    <location>
        <begin position="42"/>
        <end position="45"/>
    </location>
</feature>
<feature type="helix" evidence="3">
    <location>
        <begin position="49"/>
        <end position="56"/>
    </location>
</feature>
<feature type="turn" evidence="3">
    <location>
        <begin position="57"/>
        <end position="60"/>
    </location>
</feature>
<feature type="strand" evidence="3">
    <location>
        <begin position="62"/>
        <end position="67"/>
    </location>
</feature>
<feature type="helix" evidence="3">
    <location>
        <begin position="72"/>
        <end position="83"/>
    </location>
</feature>
<reference key="1">
    <citation type="journal article" date="1995" name="J. Biol. Chem.">
        <title>Novel proteins of the phosphotransferase system encoded within the rpoN operon of Escherichia coli. Enzyme IIANtr affects growth on organic nitrogen and the conditional lethality of an erats mutant.</title>
        <authorList>
            <person name="Powell B.S."/>
            <person name="Court D.L."/>
            <person name="Inada T."/>
            <person name="Nakamura Y."/>
            <person name="Michotey V."/>
            <person name="Cui X."/>
            <person name="Reizer A."/>
            <person name="Saier M.H. Jr."/>
            <person name="Reizer J."/>
        </authorList>
    </citation>
    <scope>NUCLEOTIDE SEQUENCE [GENOMIC DNA]</scope>
    <scope>CHARACTERIZATION</scope>
    <source>
        <strain>K12 / W3110 / ATCC 27325 / DSM 5911</strain>
    </source>
</reference>
<reference key="2">
    <citation type="journal article" date="1994" name="Microbiology">
        <title>Molecular analysis of the operon which encodes the RNA polymerase sigma factor sigma 54 of Escherichia coli.</title>
        <authorList>
            <person name="Jones D.H.A."/>
            <person name="Franklin C.F.H."/>
            <person name="Thomas C.M."/>
        </authorList>
    </citation>
    <scope>NUCLEOTIDE SEQUENCE [GENOMIC DNA]</scope>
    <source>
        <strain>K12</strain>
    </source>
</reference>
<reference key="3">
    <citation type="submission" date="1994-12" db="EMBL/GenBank/DDBJ databases">
        <authorList>
            <person name="Plunkett G. III"/>
        </authorList>
    </citation>
    <scope>NUCLEOTIDE SEQUENCE [GENOMIC DNA]</scope>
    <source>
        <strain>K12 / MG1655 / ATCC 47076</strain>
    </source>
</reference>
<reference key="4">
    <citation type="journal article" date="1997" name="Science">
        <title>The complete genome sequence of Escherichia coli K-12.</title>
        <authorList>
            <person name="Blattner F.R."/>
            <person name="Plunkett G. III"/>
            <person name="Bloch C.A."/>
            <person name="Perna N.T."/>
            <person name="Burland V."/>
            <person name="Riley M."/>
            <person name="Collado-Vides J."/>
            <person name="Glasner J.D."/>
            <person name="Rode C.K."/>
            <person name="Mayhew G.F."/>
            <person name="Gregor J."/>
            <person name="Davis N.W."/>
            <person name="Kirkpatrick H.A."/>
            <person name="Goeden M.A."/>
            <person name="Rose D.J."/>
            <person name="Mau B."/>
            <person name="Shao Y."/>
        </authorList>
    </citation>
    <scope>NUCLEOTIDE SEQUENCE [LARGE SCALE GENOMIC DNA]</scope>
    <source>
        <strain>K12 / MG1655 / ATCC 47076</strain>
    </source>
</reference>
<reference key="5">
    <citation type="journal article" date="2006" name="Mol. Syst. Biol.">
        <title>Highly accurate genome sequences of Escherichia coli K-12 strains MG1655 and W3110.</title>
        <authorList>
            <person name="Hayashi K."/>
            <person name="Morooka N."/>
            <person name="Yamamoto Y."/>
            <person name="Fujita K."/>
            <person name="Isono K."/>
            <person name="Choi S."/>
            <person name="Ohtsubo E."/>
            <person name="Baba T."/>
            <person name="Wanner B.L."/>
            <person name="Mori H."/>
            <person name="Horiuchi T."/>
        </authorList>
    </citation>
    <scope>NUCLEOTIDE SEQUENCE [LARGE SCALE GENOMIC DNA]</scope>
    <source>
        <strain>K12 / W3110 / ATCC 27325 / DSM 5911</strain>
    </source>
</reference>
<gene>
    <name type="primary">ptsO</name>
    <name type="synonym">npr</name>
    <name type="synonym">rpoR</name>
    <name type="synonym">yhbK</name>
    <name type="ordered locus">b3206</name>
    <name type="ordered locus">JW3173</name>
</gene>
<comment type="function">
    <text>Component of the phosphoenolpyruvate-dependent nitrogen-metabolic phosphotransferase system (nitrogen-metabolic PTS), that seems to be involved in regulating nitrogen metabolism. The phosphoryl group from phosphoenolpyruvate (PEP) is transferred to the phosphoryl carrier protein NPr by enzyme I-Ntr. Phospho-NPr then transfers it to EIIA-Ntr. Could function in the transcriptional regulation of sigma-54 dependent operons in conjunction with the NPr (PtsO) and EIIA-Ntr (PtsN) proteins.</text>
</comment>
<comment type="subcellular location">
    <subcellularLocation>
        <location evidence="2">Cytoplasm</location>
    </subcellularLocation>
</comment>
<comment type="miscellaneous">
    <text>Enzyme I of the sugar PTS has been shown in PubMed:7876255 to phosphorylate NPr of the nitrogen-metabolic PTS, though much less efficiently than it does HPr. This process may link carbon and nitrogen assimilation.</text>
</comment>
<comment type="similarity">
    <text evidence="2">Belongs to the HPr family.</text>
</comment>
<keyword id="KW-0002">3D-structure</keyword>
<keyword id="KW-0963">Cytoplasm</keyword>
<keyword id="KW-0598">Phosphotransferase system</keyword>
<keyword id="KW-1185">Reference proteome</keyword>
<dbReference type="EMBL" id="U12684">
    <property type="protein sequence ID" value="AAB60167.1"/>
    <property type="molecule type" value="Genomic_DNA"/>
</dbReference>
<dbReference type="EMBL" id="Z27094">
    <property type="protein sequence ID" value="CAA81621.1"/>
    <property type="molecule type" value="Genomic_DNA"/>
</dbReference>
<dbReference type="EMBL" id="U18997">
    <property type="protein sequence ID" value="AAA58008.1"/>
    <property type="molecule type" value="Genomic_DNA"/>
</dbReference>
<dbReference type="EMBL" id="U00096">
    <property type="protein sequence ID" value="AAC76238.1"/>
    <property type="molecule type" value="Genomic_DNA"/>
</dbReference>
<dbReference type="EMBL" id="AP009048">
    <property type="protein sequence ID" value="BAE77250.1"/>
    <property type="molecule type" value="Genomic_DNA"/>
</dbReference>
<dbReference type="PIR" id="I76722">
    <property type="entry name" value="I76722"/>
</dbReference>
<dbReference type="RefSeq" id="NP_417673.1">
    <property type="nucleotide sequence ID" value="NC_000913.3"/>
</dbReference>
<dbReference type="RefSeq" id="WP_000216791.1">
    <property type="nucleotide sequence ID" value="NZ_STEB01000012.1"/>
</dbReference>
<dbReference type="PDB" id="5T17">
    <property type="method" value="NMR"/>
    <property type="chains" value="A=1-85"/>
</dbReference>
<dbReference type="PDB" id="5T1N">
    <property type="method" value="NMR"/>
    <property type="chains" value="A=1-85"/>
</dbReference>
<dbReference type="PDB" id="5T1O">
    <property type="method" value="NMR"/>
    <property type="chains" value="A=1-85"/>
</dbReference>
<dbReference type="PDBsum" id="5T17"/>
<dbReference type="PDBsum" id="5T1N"/>
<dbReference type="PDBsum" id="5T1O"/>
<dbReference type="SASBDB" id="P0A9N0"/>
<dbReference type="SMR" id="P0A9N0"/>
<dbReference type="BioGRID" id="4261609">
    <property type="interactions" value="13"/>
</dbReference>
<dbReference type="FunCoup" id="P0A9N0">
    <property type="interactions" value="59"/>
</dbReference>
<dbReference type="STRING" id="511145.b3206"/>
<dbReference type="jPOST" id="P0A9N0"/>
<dbReference type="PaxDb" id="511145-b3206"/>
<dbReference type="EnsemblBacteria" id="AAC76238">
    <property type="protein sequence ID" value="AAC76238"/>
    <property type="gene ID" value="b3206"/>
</dbReference>
<dbReference type="GeneID" id="93778775"/>
<dbReference type="GeneID" id="947914"/>
<dbReference type="KEGG" id="ecj:JW3173"/>
<dbReference type="KEGG" id="eco:b3206"/>
<dbReference type="KEGG" id="ecoc:C3026_17445"/>
<dbReference type="PATRIC" id="fig|1411691.4.peg.3525"/>
<dbReference type="EchoBASE" id="EB2067"/>
<dbReference type="eggNOG" id="COG1925">
    <property type="taxonomic scope" value="Bacteria"/>
</dbReference>
<dbReference type="HOGENOM" id="CLU_136230_1_3_6"/>
<dbReference type="InParanoid" id="P0A9N0"/>
<dbReference type="OMA" id="PAMMLFE"/>
<dbReference type="OrthoDB" id="9798965at2"/>
<dbReference type="PhylomeDB" id="P0A9N0"/>
<dbReference type="BioCyc" id="EcoCyc:EG12147-MONOMER"/>
<dbReference type="PRO" id="PR:P0A9N0"/>
<dbReference type="Proteomes" id="UP000000625">
    <property type="component" value="Chromosome"/>
</dbReference>
<dbReference type="GO" id="GO:0005737">
    <property type="term" value="C:cytoplasm"/>
    <property type="evidence" value="ECO:0007669"/>
    <property type="project" value="UniProtKB-SubCell"/>
</dbReference>
<dbReference type="GO" id="GO:0016772">
    <property type="term" value="F:transferase activity, transferring phosphorus-containing groups"/>
    <property type="evidence" value="ECO:0000314"/>
    <property type="project" value="EcoCyc"/>
</dbReference>
<dbReference type="GO" id="GO:0009401">
    <property type="term" value="P:phosphoenolpyruvate-dependent sugar phosphotransferase system"/>
    <property type="evidence" value="ECO:0000318"/>
    <property type="project" value="GO_Central"/>
</dbReference>
<dbReference type="CDD" id="cd00367">
    <property type="entry name" value="PTS-HPr_like"/>
    <property type="match status" value="1"/>
</dbReference>
<dbReference type="FunFam" id="3.30.1340.10:FF:000002">
    <property type="entry name" value="PTS phosphocarrier protein NPr"/>
    <property type="match status" value="1"/>
</dbReference>
<dbReference type="Gene3D" id="3.30.1340.10">
    <property type="entry name" value="HPr-like"/>
    <property type="match status" value="1"/>
</dbReference>
<dbReference type="InterPro" id="IPR050399">
    <property type="entry name" value="HPr"/>
</dbReference>
<dbReference type="InterPro" id="IPR000032">
    <property type="entry name" value="HPr-like"/>
</dbReference>
<dbReference type="InterPro" id="IPR035895">
    <property type="entry name" value="HPr-like_sf"/>
</dbReference>
<dbReference type="InterPro" id="IPR001020">
    <property type="entry name" value="PTS_HPr_His_P_site"/>
</dbReference>
<dbReference type="InterPro" id="IPR002114">
    <property type="entry name" value="PTS_HPr_Ser_P_site"/>
</dbReference>
<dbReference type="NCBIfam" id="NF008146">
    <property type="entry name" value="PRK10897.1"/>
    <property type="match status" value="1"/>
</dbReference>
<dbReference type="NCBIfam" id="TIGR01003">
    <property type="entry name" value="PTS_HPr_family"/>
    <property type="match status" value="1"/>
</dbReference>
<dbReference type="PANTHER" id="PTHR33705">
    <property type="entry name" value="PHOSPHOCARRIER PROTEIN HPR"/>
    <property type="match status" value="1"/>
</dbReference>
<dbReference type="PANTHER" id="PTHR33705:SF2">
    <property type="entry name" value="PHOSPHOCARRIER PROTEIN NPR"/>
    <property type="match status" value="1"/>
</dbReference>
<dbReference type="Pfam" id="PF00381">
    <property type="entry name" value="PTS-HPr"/>
    <property type="match status" value="1"/>
</dbReference>
<dbReference type="PRINTS" id="PR00107">
    <property type="entry name" value="PHOSPHOCPHPR"/>
</dbReference>
<dbReference type="SUPFAM" id="SSF55594">
    <property type="entry name" value="HPr-like"/>
    <property type="match status" value="1"/>
</dbReference>
<dbReference type="PROSITE" id="PS51350">
    <property type="entry name" value="PTS_HPR_DOM"/>
    <property type="match status" value="1"/>
</dbReference>
<dbReference type="PROSITE" id="PS00369">
    <property type="entry name" value="PTS_HPR_HIS"/>
    <property type="match status" value="1"/>
</dbReference>
<dbReference type="PROSITE" id="PS00589">
    <property type="entry name" value="PTS_HPR_SER"/>
    <property type="match status" value="1"/>
</dbReference>
<sequence>MTVKQTVEITNKLGMHARPAMKLFELMQGFDAEVLLRNDEGTEAEANSVIALLMLDSAKGRQIEVEATGPQEEEALAAVIALFNSGFDED</sequence>